<name>DD21B_XENLA</name>
<reference key="1">
    <citation type="journal article" date="2003" name="J. Biol. Chem.">
        <title>Down-regulation of RNA helicase II/Gu results in the depletion of 18 and 28 S rRNAs in Xenopus oocyte.</title>
        <authorList>
            <person name="Yang H."/>
            <person name="Zhou J."/>
            <person name="Ochs R.L."/>
            <person name="Henning D."/>
            <person name="Jin R."/>
            <person name="Valdez B.C."/>
        </authorList>
    </citation>
    <scope>NUCLEOTIDE SEQUENCE [MRNA]</scope>
    <scope>FUNCTION</scope>
    <scope>SUBCELLULAR LOCATION</scope>
    <scope>TISSUE SPECIFICITY</scope>
</reference>
<reference key="2">
    <citation type="submission" date="2005-11" db="EMBL/GenBank/DDBJ databases">
        <authorList>
            <consortium name="NIH - Xenopus Gene Collection (XGC) project"/>
        </authorList>
    </citation>
    <scope>NUCLEOTIDE SEQUENCE [LARGE SCALE MRNA]</scope>
    <source>
        <tissue>Embryo</tissue>
    </source>
</reference>
<keyword id="KW-0067">ATP-binding</keyword>
<keyword id="KW-0963">Cytoplasm</keyword>
<keyword id="KW-0347">Helicase</keyword>
<keyword id="KW-0378">Hydrolase</keyword>
<keyword id="KW-0496">Mitochondrion</keyword>
<keyword id="KW-0547">Nucleotide-binding</keyword>
<keyword id="KW-0539">Nucleus</keyword>
<keyword id="KW-1185">Reference proteome</keyword>
<keyword id="KW-0677">Repeat</keyword>
<keyword id="KW-0694">RNA-binding</keyword>
<keyword id="KW-0698">rRNA processing</keyword>
<keyword id="KW-0804">Transcription</keyword>
<sequence length="800" mass="89378">MPGKVYTDEMEGKSIKKKKLTETPLPKLKKRKMQNGETEDLDLEHVTESVNGEINNNNPTPKLKKNKKPAPKSDLSETAEQCDGEQPDPSTPTPKKVKKKKLKEGKEDSDAQEETNISLSSQGGQCDGEQPDPSTPTPKKIKKKKLKEGKEDSDAQEETDISEPQMNGVKSVKKSKKNTTGDEPAPKKRKTDTSEITAANECEEKELTKEEEEIKKEKIDGDFSKFPISKDTIKNLQAKGVTYLFPIQSKTFHTVYSGKDVVVQARTGTGKTFSFGIPLVERLSEDQQPLARGRAPRVIILTPTRELAIQITNELRSMTKKLKVACFYGGTPYQQQVFAIKDGIDFLVGTPGRIRDLVQNYRLDLTALKHVVLDEVDMMFDVGFSEQVEEILSVRYKPDPEENPQTLLFSATCPDWMYNVAKKYMRKQYEKVDLVGHRSQKAAITVEHLAIECNRSQKAAVLGDIVQVYSGSHGKTIIFCDSKLQAHELSTNCGSLKQSAKPLHGDLQQKEREVVLKGFRQGTFEVLIATNVAARGLDIPEVDLVVLYSAPKEADAYVHRSGRTGRAGRTGVCISLYEPWEKHYLRNVERSTGITFKRVGIPSLMNVAKSSSADAIKSLDTVPADVIEHFKEYAQELIEKKGALTALAAALAHISGATSIKQRSLLNMEAGYMTITLKSSVPIHNLSYAWRSIKEQLGEDVDSKIHRMCLLKDSMGVCFDVRSEDLQSMQESWSDTRRWQFTITTELPEIQESERSFDGPRNRSFGGRGRRPFDRRNNSRNSSGGGGGRRGRSGGFRRGR</sequence>
<dbReference type="EC" id="3.6.4.13" evidence="2"/>
<dbReference type="EMBL" id="AF302422">
    <property type="protein sequence ID" value="AAG22818.1"/>
    <property type="molecule type" value="mRNA"/>
</dbReference>
<dbReference type="EMBL" id="BC108448">
    <property type="protein sequence ID" value="AAI08449.1"/>
    <property type="status" value="ALT_INIT"/>
    <property type="molecule type" value="mRNA"/>
</dbReference>
<dbReference type="RefSeq" id="NP_001082033.1">
    <property type="nucleotide sequence ID" value="NM_001088564.1"/>
</dbReference>
<dbReference type="SMR" id="Q9DF36"/>
<dbReference type="GeneID" id="398188"/>
<dbReference type="KEGG" id="xla:398188"/>
<dbReference type="AGR" id="Xenbase:XB-GENE-1012552"/>
<dbReference type="CTD" id="398188"/>
<dbReference type="Xenbase" id="XB-GENE-1012552">
    <property type="gene designation" value="ddx21.L"/>
</dbReference>
<dbReference type="OrthoDB" id="4255at2759"/>
<dbReference type="Proteomes" id="UP000186698">
    <property type="component" value="Chromosome 7L"/>
</dbReference>
<dbReference type="Bgee" id="398188">
    <property type="expression patterns" value="Expressed in lung and 19 other cell types or tissues"/>
</dbReference>
<dbReference type="GO" id="GO:0005829">
    <property type="term" value="C:cytosol"/>
    <property type="evidence" value="ECO:0000250"/>
    <property type="project" value="UniProtKB"/>
</dbReference>
<dbReference type="GO" id="GO:0005739">
    <property type="term" value="C:mitochondrion"/>
    <property type="evidence" value="ECO:0007669"/>
    <property type="project" value="UniProtKB-SubCell"/>
</dbReference>
<dbReference type="GO" id="GO:0005730">
    <property type="term" value="C:nucleolus"/>
    <property type="evidence" value="ECO:0000314"/>
    <property type="project" value="UniProtKB"/>
</dbReference>
<dbReference type="GO" id="GO:0005654">
    <property type="term" value="C:nucleoplasm"/>
    <property type="evidence" value="ECO:0000250"/>
    <property type="project" value="UniProtKB"/>
</dbReference>
<dbReference type="GO" id="GO:0097322">
    <property type="term" value="F:7SK snRNA binding"/>
    <property type="evidence" value="ECO:0000250"/>
    <property type="project" value="UniProtKB"/>
</dbReference>
<dbReference type="GO" id="GO:0005524">
    <property type="term" value="F:ATP binding"/>
    <property type="evidence" value="ECO:0007669"/>
    <property type="project" value="UniProtKB-KW"/>
</dbReference>
<dbReference type="GO" id="GO:0016887">
    <property type="term" value="F:ATP hydrolysis activity"/>
    <property type="evidence" value="ECO:0007669"/>
    <property type="project" value="RHEA"/>
</dbReference>
<dbReference type="GO" id="GO:0003724">
    <property type="term" value="F:RNA helicase activity"/>
    <property type="evidence" value="ECO:0000250"/>
    <property type="project" value="UniProtKB"/>
</dbReference>
<dbReference type="GO" id="GO:0019843">
    <property type="term" value="F:rRNA binding"/>
    <property type="evidence" value="ECO:0000250"/>
    <property type="project" value="UniProtKB"/>
</dbReference>
<dbReference type="GO" id="GO:0030515">
    <property type="term" value="F:snoRNA binding"/>
    <property type="evidence" value="ECO:0000250"/>
    <property type="project" value="UniProtKB"/>
</dbReference>
<dbReference type="GO" id="GO:0062176">
    <property type="term" value="P:R-loop processing"/>
    <property type="evidence" value="ECO:0000250"/>
    <property type="project" value="UniProtKB"/>
</dbReference>
<dbReference type="GO" id="GO:0006364">
    <property type="term" value="P:rRNA processing"/>
    <property type="evidence" value="ECO:0000315"/>
    <property type="project" value="UniProtKB"/>
</dbReference>
<dbReference type="GO" id="GO:0006366">
    <property type="term" value="P:transcription by RNA polymerase II"/>
    <property type="evidence" value="ECO:0000250"/>
    <property type="project" value="UniProtKB"/>
</dbReference>
<dbReference type="CDD" id="cd17944">
    <property type="entry name" value="DEADc_DDX21_DDX50"/>
    <property type="match status" value="1"/>
</dbReference>
<dbReference type="CDD" id="cd12936">
    <property type="entry name" value="GUCT_RHII_Gualpha_beta"/>
    <property type="match status" value="1"/>
</dbReference>
<dbReference type="CDD" id="cd18787">
    <property type="entry name" value="SF2_C_DEAD"/>
    <property type="match status" value="1"/>
</dbReference>
<dbReference type="FunFam" id="3.30.70.2280:FF:000001">
    <property type="entry name" value="ATP-dependent RNA helicase DDX50"/>
    <property type="match status" value="1"/>
</dbReference>
<dbReference type="FunFam" id="3.40.50.300:FF:000666">
    <property type="entry name" value="ATP-dependent RNA helicase DDX50"/>
    <property type="match status" value="1"/>
</dbReference>
<dbReference type="FunFam" id="3.40.50.300:FF:001168">
    <property type="entry name" value="nucleolar RNA helicase 2"/>
    <property type="match status" value="1"/>
</dbReference>
<dbReference type="Gene3D" id="3.30.70.2280">
    <property type="match status" value="1"/>
</dbReference>
<dbReference type="Gene3D" id="3.40.50.300">
    <property type="entry name" value="P-loop containing nucleotide triphosphate hydrolases"/>
    <property type="match status" value="2"/>
</dbReference>
<dbReference type="InterPro" id="IPR011545">
    <property type="entry name" value="DEAD/DEAH_box_helicase_dom"/>
</dbReference>
<dbReference type="InterPro" id="IPR050079">
    <property type="entry name" value="DEAD_box_RNA_helicase"/>
</dbReference>
<dbReference type="InterPro" id="IPR012562">
    <property type="entry name" value="GUCT"/>
</dbReference>
<dbReference type="InterPro" id="IPR014001">
    <property type="entry name" value="Helicase_ATP-bd"/>
</dbReference>
<dbReference type="InterPro" id="IPR001650">
    <property type="entry name" value="Helicase_C-like"/>
</dbReference>
<dbReference type="InterPro" id="IPR027417">
    <property type="entry name" value="P-loop_NTPase"/>
</dbReference>
<dbReference type="InterPro" id="IPR035979">
    <property type="entry name" value="RBD_domain_sf"/>
</dbReference>
<dbReference type="PANTHER" id="PTHR47959">
    <property type="entry name" value="ATP-DEPENDENT RNA HELICASE RHLE-RELATED"/>
    <property type="match status" value="1"/>
</dbReference>
<dbReference type="PANTHER" id="PTHR47959:SF19">
    <property type="entry name" value="NUCLEOLAR RNA HELICASE 2-A"/>
    <property type="match status" value="1"/>
</dbReference>
<dbReference type="Pfam" id="PF00270">
    <property type="entry name" value="DEAD"/>
    <property type="match status" value="1"/>
</dbReference>
<dbReference type="Pfam" id="PF08152">
    <property type="entry name" value="GUCT"/>
    <property type="match status" value="1"/>
</dbReference>
<dbReference type="Pfam" id="PF00271">
    <property type="entry name" value="Helicase_C"/>
    <property type="match status" value="1"/>
</dbReference>
<dbReference type="SMART" id="SM00487">
    <property type="entry name" value="DEXDc"/>
    <property type="match status" value="1"/>
</dbReference>
<dbReference type="SMART" id="SM00490">
    <property type="entry name" value="HELICc"/>
    <property type="match status" value="1"/>
</dbReference>
<dbReference type="SUPFAM" id="SSF52540">
    <property type="entry name" value="P-loop containing nucleoside triphosphate hydrolases"/>
    <property type="match status" value="1"/>
</dbReference>
<dbReference type="SUPFAM" id="SSF54928">
    <property type="entry name" value="RNA-binding domain, RBD"/>
    <property type="match status" value="1"/>
</dbReference>
<dbReference type="PROSITE" id="PS51192">
    <property type="entry name" value="HELICASE_ATP_BIND_1"/>
    <property type="match status" value="1"/>
</dbReference>
<dbReference type="PROSITE" id="PS51194">
    <property type="entry name" value="HELICASE_CTER"/>
    <property type="match status" value="1"/>
</dbReference>
<dbReference type="PROSITE" id="PS51195">
    <property type="entry name" value="Q_MOTIF"/>
    <property type="match status" value="1"/>
</dbReference>
<gene>
    <name type="primary">ddx21-b</name>
    <name type="synonym">ddx21</name>
</gene>
<proteinExistence type="evidence at transcript level"/>
<feature type="chain" id="PRO_0000432389" description="Nucleolar RNA helicase 2-B">
    <location>
        <begin position="1"/>
        <end position="800"/>
    </location>
</feature>
<feature type="domain" description="Helicase ATP-binding" evidence="3">
    <location>
        <begin position="252"/>
        <end position="431"/>
    </location>
</feature>
<feature type="domain" description="Helicase C-terminal" evidence="4">
    <location>
        <begin position="464"/>
        <end position="620"/>
    </location>
</feature>
<feature type="region of interest" description="Disordered" evidence="6">
    <location>
        <begin position="1"/>
        <end position="200"/>
    </location>
</feature>
<feature type="region of interest" description="Disordered" evidence="6">
    <location>
        <begin position="750"/>
        <end position="800"/>
    </location>
</feature>
<feature type="short sequence motif" description="Q motif" evidence="5">
    <location>
        <begin position="221"/>
        <end position="249"/>
    </location>
</feature>
<feature type="short sequence motif" description="DEAD box" evidence="3">
    <location>
        <begin position="374"/>
        <end position="377"/>
    </location>
</feature>
<feature type="compositionally biased region" description="Basic and acidic residues" evidence="6">
    <location>
        <begin position="1"/>
        <end position="14"/>
    </location>
</feature>
<feature type="compositionally biased region" description="Polar residues" evidence="6">
    <location>
        <begin position="114"/>
        <end position="124"/>
    </location>
</feature>
<feature type="compositionally biased region" description="Basic and acidic residues" evidence="6">
    <location>
        <begin position="752"/>
        <end position="761"/>
    </location>
</feature>
<feature type="compositionally biased region" description="Basic residues" evidence="6">
    <location>
        <begin position="789"/>
        <end position="800"/>
    </location>
</feature>
<feature type="binding site" evidence="3">
    <location>
        <begin position="265"/>
        <end position="272"/>
    </location>
    <ligand>
        <name>ATP</name>
        <dbReference type="ChEBI" id="CHEBI:30616"/>
    </ligand>
</feature>
<feature type="sequence conflict" description="In Ref. 2; AAI08449." evidence="9" ref="2">
    <original>A</original>
    <variation>V</variation>
    <location>
        <position position="367"/>
    </location>
</feature>
<feature type="sequence conflict" description="In Ref. 2; AAI08449." evidence="9" ref="2">
    <original>V</original>
    <variation>M</variation>
    <location>
        <position position="382"/>
    </location>
</feature>
<protein>
    <recommendedName>
        <fullName evidence="9">Nucleolar RNA helicase 2-B</fullName>
        <ecNumber evidence="2">3.6.4.13</ecNumber>
    </recommendedName>
    <alternativeName>
        <fullName>DEAD box protein 21-B</fullName>
    </alternativeName>
    <alternativeName>
        <fullName>Gu-alpha-B</fullName>
    </alternativeName>
    <alternativeName>
        <fullName evidence="8">Nucleolar RNA helicase Gu-B</fullName>
        <shortName evidence="8">xGu-2</shortName>
    </alternativeName>
    <alternativeName>
        <fullName evidence="8">Nucleolar RNA helicase II-B</fullName>
    </alternativeName>
    <alternativeName>
        <fullName evidence="8">RH II/Gu-B</fullName>
    </alternativeName>
</protein>
<accession>Q9DF36</accession>
<accession>Q32NW4</accession>
<organism>
    <name type="scientific">Xenopus laevis</name>
    <name type="common">African clawed frog</name>
    <dbReference type="NCBI Taxonomy" id="8355"/>
    <lineage>
        <taxon>Eukaryota</taxon>
        <taxon>Metazoa</taxon>
        <taxon>Chordata</taxon>
        <taxon>Craniata</taxon>
        <taxon>Vertebrata</taxon>
        <taxon>Euteleostomi</taxon>
        <taxon>Amphibia</taxon>
        <taxon>Batrachia</taxon>
        <taxon>Anura</taxon>
        <taxon>Pipoidea</taxon>
        <taxon>Pipidae</taxon>
        <taxon>Xenopodinae</taxon>
        <taxon>Xenopus</taxon>
        <taxon>Xenopus</taxon>
    </lineage>
</organism>
<comment type="function">
    <text evidence="2 10">RNA helicase that acts as a sensor of the transcriptional status of both RNA polymerase (Pol) I and II: promotes ribosomal RNA (rRNA) processing and transcription from polymerase II (Pol II) (By similarity). Binds various RNAs, such as rRNAs, snoRNAs, 7SK and, at lower extent, mRNAs (By similarity). In the nucleolus, localizes to rDNA locus, where it directly binds rRNAs and snoRNAs, and promotes rRNA transcription, processing and modification (Probable) (PubMed:12851405). Required for rRNA 2'-O-methylation, possibly by promoting the recruitment of late-acting snoRNAs SNORD56 and SNORD58 with pre-ribosomal complexes (By similarity). In the nucleoplasm, binds 7SK RNA and is recruited to the promoters of Pol II-transcribed genes: acts by facilitating the release of P-TEFb from inhibitory 7SK snRNP in a manner that is dependent on its helicase activity, thereby promoting transcription of its target genes (By similarity). Required to prevent R-loop-associated DNA damage and transcription-associated genomic instability (By similarity).</text>
</comment>
<comment type="catalytic activity">
    <reaction evidence="2">
        <text>ATP + H2O = ADP + phosphate + H(+)</text>
        <dbReference type="Rhea" id="RHEA:13065"/>
        <dbReference type="ChEBI" id="CHEBI:15377"/>
        <dbReference type="ChEBI" id="CHEBI:15378"/>
        <dbReference type="ChEBI" id="CHEBI:30616"/>
        <dbReference type="ChEBI" id="CHEBI:43474"/>
        <dbReference type="ChEBI" id="CHEBI:456216"/>
        <dbReference type="EC" id="3.6.4.13"/>
    </reaction>
    <physiologicalReaction direction="left-to-right" evidence="2">
        <dbReference type="Rhea" id="RHEA:13066"/>
    </physiologicalReaction>
</comment>
<comment type="subcellular location">
    <subcellularLocation>
        <location evidence="7">Nucleus</location>
        <location evidence="7">Nucleolus</location>
    </subcellularLocation>
    <subcellularLocation>
        <location evidence="2">Nucleus</location>
        <location evidence="2">Nucleoplasm</location>
    </subcellularLocation>
    <subcellularLocation>
        <location evidence="1">Cytoplasm</location>
        <location evidence="1">Cytosol</location>
    </subcellularLocation>
    <subcellularLocation>
        <location evidence="1">Mitochondrion</location>
    </subcellularLocation>
</comment>
<comment type="tissue specificity">
    <text evidence="7">Widely expressed. Expressed at higher level in stomach. Expressed at lower level compared to ddx21-a.</text>
</comment>
<comment type="similarity">
    <text evidence="9">Belongs to the DEAD box helicase family. DDX21/DDX50 subfamily.</text>
</comment>
<comment type="sequence caution" evidence="9">
    <conflict type="erroneous initiation">
        <sequence resource="EMBL-CDS" id="AAI08449"/>
    </conflict>
    <text>Truncated N-terminus.</text>
</comment>
<evidence type="ECO:0000250" key="1">
    <source>
        <dbReference type="UniProtKB" id="Q9JIK5"/>
    </source>
</evidence>
<evidence type="ECO:0000250" key="2">
    <source>
        <dbReference type="UniProtKB" id="Q9NR30"/>
    </source>
</evidence>
<evidence type="ECO:0000255" key="3">
    <source>
        <dbReference type="PROSITE-ProRule" id="PRU00541"/>
    </source>
</evidence>
<evidence type="ECO:0000255" key="4">
    <source>
        <dbReference type="PROSITE-ProRule" id="PRU00542"/>
    </source>
</evidence>
<evidence type="ECO:0000255" key="5">
    <source>
        <dbReference type="PROSITE-ProRule" id="PRU00552"/>
    </source>
</evidence>
<evidence type="ECO:0000256" key="6">
    <source>
        <dbReference type="SAM" id="MobiDB-lite"/>
    </source>
</evidence>
<evidence type="ECO:0000269" key="7">
    <source>
    </source>
</evidence>
<evidence type="ECO:0000303" key="8">
    <source>
    </source>
</evidence>
<evidence type="ECO:0000305" key="9"/>
<evidence type="ECO:0000305" key="10">
    <source>
    </source>
</evidence>